<evidence type="ECO:0000305" key="1"/>
<comment type="function">
    <text>Catalyzes the isomerization between 2-isopropylmalate and 3-isopropylmalate, via the formation of 2-isopropylmaleate.</text>
</comment>
<comment type="catalytic activity">
    <reaction>
        <text>(2R,3S)-3-isopropylmalate = (2S)-2-isopropylmalate</text>
        <dbReference type="Rhea" id="RHEA:32287"/>
        <dbReference type="ChEBI" id="CHEBI:1178"/>
        <dbReference type="ChEBI" id="CHEBI:35121"/>
        <dbReference type="EC" id="4.2.1.33"/>
    </reaction>
</comment>
<comment type="pathway">
    <text>Amino-acid biosynthesis; L-leucine biosynthesis; L-leucine from 3-methyl-2-oxobutanoate: step 2/4.</text>
</comment>
<comment type="subunit">
    <text>Heterodimer of LeuC and LeuD.</text>
</comment>
<comment type="similarity">
    <text evidence="1">Belongs to the LeuD family. LeuD type 1 subfamily.</text>
</comment>
<comment type="caution">
    <text evidence="1">The leucine biosynthesis pathway is not functional in the dairy strain IL1403.</text>
</comment>
<organism>
    <name type="scientific">Lactococcus lactis subsp. lactis (strain IL1403)</name>
    <name type="common">Streptococcus lactis</name>
    <dbReference type="NCBI Taxonomy" id="272623"/>
    <lineage>
        <taxon>Bacteria</taxon>
        <taxon>Bacillati</taxon>
        <taxon>Bacillota</taxon>
        <taxon>Bacilli</taxon>
        <taxon>Lactobacillales</taxon>
        <taxon>Streptococcaceae</taxon>
        <taxon>Lactococcus</taxon>
    </lineage>
</organism>
<reference key="1">
    <citation type="journal article" date="1992" name="J. Bacteriol.">
        <title>Branched-chain amino acid biosynthesis genes in Lactococcus lactis subsp. lactis.</title>
        <authorList>
            <person name="Godon J.-J."/>
            <person name="Chopin M.-C."/>
            <person name="Ehrlich S.D."/>
        </authorList>
    </citation>
    <scope>NUCLEOTIDE SEQUENCE [GENOMIC DNA]</scope>
    <source>
        <strain>NCDO 2118</strain>
    </source>
</reference>
<reference key="2">
    <citation type="journal article" date="1993" name="J. Bacteriol.">
        <title>Gene inactivation in Lactococcus lactis: branched-chain amino acid biosynthesis.</title>
        <authorList>
            <person name="Godon J.-J."/>
            <person name="Delorme C."/>
            <person name="Bardowski J."/>
            <person name="Chopin M.-C."/>
            <person name="Ehrlich S.D."/>
            <person name="Renault P."/>
        </authorList>
    </citation>
    <scope>NUCLEOTIDE SEQUENCE [GENOMIC DNA]</scope>
    <source>
        <strain>IL1403</strain>
    </source>
</reference>
<reference key="3">
    <citation type="journal article" date="2001" name="Genome Res.">
        <title>The complete genome sequence of the lactic acid bacterium Lactococcus lactis ssp. lactis IL1403.</title>
        <authorList>
            <person name="Bolotin A."/>
            <person name="Wincker P."/>
            <person name="Mauger S."/>
            <person name="Jaillon O."/>
            <person name="Malarme K."/>
            <person name="Weissenbach J."/>
            <person name="Ehrlich S.D."/>
            <person name="Sorokin A."/>
        </authorList>
    </citation>
    <scope>NUCLEOTIDE SEQUENCE [LARGE SCALE GENOMIC DNA]</scope>
    <source>
        <strain>IL1403</strain>
    </source>
</reference>
<dbReference type="EC" id="4.2.1.33"/>
<dbReference type="EMBL" id="U92974">
    <property type="protein sequence ID" value="AAB81916.1"/>
    <property type="molecule type" value="Genomic_DNA"/>
</dbReference>
<dbReference type="EMBL" id="AE005176">
    <property type="protein sequence ID" value="AAK05319.1"/>
    <property type="molecule type" value="Genomic_DNA"/>
</dbReference>
<dbReference type="PIR" id="E36889">
    <property type="entry name" value="E36889"/>
</dbReference>
<dbReference type="RefSeq" id="NP_267377.1">
    <property type="nucleotide sequence ID" value="NC_002662.1"/>
</dbReference>
<dbReference type="RefSeq" id="WP_003131129.1">
    <property type="nucleotide sequence ID" value="NC_002662.1"/>
</dbReference>
<dbReference type="SMR" id="Q02144"/>
<dbReference type="PaxDb" id="272623-L0076"/>
<dbReference type="EnsemblBacteria" id="AAK05319">
    <property type="protein sequence ID" value="AAK05319"/>
    <property type="gene ID" value="L0076"/>
</dbReference>
<dbReference type="GeneID" id="89633334"/>
<dbReference type="KEGG" id="lla:L0076"/>
<dbReference type="PATRIC" id="fig|272623.7.peg.1320"/>
<dbReference type="eggNOG" id="COG0066">
    <property type="taxonomic scope" value="Bacteria"/>
</dbReference>
<dbReference type="HOGENOM" id="CLU_081378_0_3_9"/>
<dbReference type="OrthoDB" id="9777465at2"/>
<dbReference type="UniPathway" id="UPA00048">
    <property type="reaction ID" value="UER00071"/>
</dbReference>
<dbReference type="Proteomes" id="UP000002196">
    <property type="component" value="Chromosome"/>
</dbReference>
<dbReference type="GO" id="GO:0009316">
    <property type="term" value="C:3-isopropylmalate dehydratase complex"/>
    <property type="evidence" value="ECO:0007669"/>
    <property type="project" value="InterPro"/>
</dbReference>
<dbReference type="GO" id="GO:0003861">
    <property type="term" value="F:3-isopropylmalate dehydratase activity"/>
    <property type="evidence" value="ECO:0007669"/>
    <property type="project" value="UniProtKB-UniRule"/>
</dbReference>
<dbReference type="GO" id="GO:0009098">
    <property type="term" value="P:L-leucine biosynthetic process"/>
    <property type="evidence" value="ECO:0007669"/>
    <property type="project" value="UniProtKB-UniRule"/>
</dbReference>
<dbReference type="CDD" id="cd01577">
    <property type="entry name" value="IPMI_Swivel"/>
    <property type="match status" value="1"/>
</dbReference>
<dbReference type="FunFam" id="3.20.19.10:FF:000003">
    <property type="entry name" value="3-isopropylmalate dehydratase small subunit"/>
    <property type="match status" value="1"/>
</dbReference>
<dbReference type="Gene3D" id="3.20.19.10">
    <property type="entry name" value="Aconitase, domain 4"/>
    <property type="match status" value="1"/>
</dbReference>
<dbReference type="HAMAP" id="MF_01031">
    <property type="entry name" value="LeuD_type1"/>
    <property type="match status" value="1"/>
</dbReference>
<dbReference type="InterPro" id="IPR004431">
    <property type="entry name" value="3-IsopropMal_deHydase_ssu"/>
</dbReference>
<dbReference type="InterPro" id="IPR015928">
    <property type="entry name" value="Aconitase/3IPM_dehydase_swvl"/>
</dbReference>
<dbReference type="InterPro" id="IPR000573">
    <property type="entry name" value="AconitaseA/IPMdHydase_ssu_swvl"/>
</dbReference>
<dbReference type="InterPro" id="IPR033940">
    <property type="entry name" value="IPMI_Swivel"/>
</dbReference>
<dbReference type="InterPro" id="IPR050075">
    <property type="entry name" value="LeuD"/>
</dbReference>
<dbReference type="NCBIfam" id="TIGR00171">
    <property type="entry name" value="leuD"/>
    <property type="match status" value="1"/>
</dbReference>
<dbReference type="NCBIfam" id="NF002458">
    <property type="entry name" value="PRK01641.1"/>
    <property type="match status" value="1"/>
</dbReference>
<dbReference type="PANTHER" id="PTHR43345:SF5">
    <property type="entry name" value="3-ISOPROPYLMALATE DEHYDRATASE SMALL SUBUNIT"/>
    <property type="match status" value="1"/>
</dbReference>
<dbReference type="PANTHER" id="PTHR43345">
    <property type="entry name" value="3-ISOPROPYLMALATE DEHYDRATASE SMALL SUBUNIT 2-RELATED-RELATED"/>
    <property type="match status" value="1"/>
</dbReference>
<dbReference type="Pfam" id="PF00694">
    <property type="entry name" value="Aconitase_C"/>
    <property type="match status" value="1"/>
</dbReference>
<dbReference type="SUPFAM" id="SSF52016">
    <property type="entry name" value="LeuD/IlvD-like"/>
    <property type="match status" value="1"/>
</dbReference>
<sequence>MEKFTIYKGTSVPVMNDNIDTDQIIPKQFLKAIDKKGFGKNLFYEWRYLKDYDENPDFILNAPKYKKASLLISGDNFGSGSSREHAAWALSDYGFRAIIAGSYSDIFYNNALKNGLLPIKQPREVLNQLTKLSSQEEITIDLPHQLIITSLGDFHFEIDPIWKDKLINGLDDIGITLQYEEAISAYEQKNQ</sequence>
<protein>
    <recommendedName>
        <fullName>3-isopropylmalate dehydratase small subunit</fullName>
        <ecNumber>4.2.1.33</ecNumber>
    </recommendedName>
    <alternativeName>
        <fullName>Alpha-IPM isomerase</fullName>
        <shortName>IPMI</shortName>
    </alternativeName>
    <alternativeName>
        <fullName>Isopropylmalate isomerase</fullName>
    </alternativeName>
</protein>
<accession>Q02144</accession>
<gene>
    <name type="primary">leuD</name>
    <name type="ordered locus">LL1221</name>
    <name type="ORF">L0076</name>
</gene>
<keyword id="KW-0028">Amino-acid biosynthesis</keyword>
<keyword id="KW-0100">Branched-chain amino acid biosynthesis</keyword>
<keyword id="KW-0432">Leucine biosynthesis</keyword>
<keyword id="KW-0456">Lyase</keyword>
<keyword id="KW-1185">Reference proteome</keyword>
<feature type="chain" id="PRO_0000141826" description="3-isopropylmalate dehydratase small subunit">
    <location>
        <begin position="1"/>
        <end position="191"/>
    </location>
</feature>
<proteinExistence type="inferred from homology"/>
<name>LEUD_LACLA</name>